<protein>
    <recommendedName>
        <fullName evidence="1">Holliday junction branch migration complex subunit RuvA</fullName>
    </recommendedName>
</protein>
<reference key="1">
    <citation type="journal article" date="2006" name="Proc. Natl. Acad. Sci. U.S.A.">
        <title>Comparative genomics of the lactic acid bacteria.</title>
        <authorList>
            <person name="Makarova K.S."/>
            <person name="Slesarev A."/>
            <person name="Wolf Y.I."/>
            <person name="Sorokin A."/>
            <person name="Mirkin B."/>
            <person name="Koonin E.V."/>
            <person name="Pavlov A."/>
            <person name="Pavlova N."/>
            <person name="Karamychev V."/>
            <person name="Polouchine N."/>
            <person name="Shakhova V."/>
            <person name="Grigoriev I."/>
            <person name="Lou Y."/>
            <person name="Rohksar D."/>
            <person name="Lucas S."/>
            <person name="Huang K."/>
            <person name="Goodstein D.M."/>
            <person name="Hawkins T."/>
            <person name="Plengvidhya V."/>
            <person name="Welker D."/>
            <person name="Hughes J."/>
            <person name="Goh Y."/>
            <person name="Benson A."/>
            <person name="Baldwin K."/>
            <person name="Lee J.-H."/>
            <person name="Diaz-Muniz I."/>
            <person name="Dosti B."/>
            <person name="Smeianov V."/>
            <person name="Wechter W."/>
            <person name="Barabote R."/>
            <person name="Lorca G."/>
            <person name="Altermann E."/>
            <person name="Barrangou R."/>
            <person name="Ganesan B."/>
            <person name="Xie Y."/>
            <person name="Rawsthorne H."/>
            <person name="Tamir D."/>
            <person name="Parker C."/>
            <person name="Breidt F."/>
            <person name="Broadbent J.R."/>
            <person name="Hutkins R."/>
            <person name="O'Sullivan D."/>
            <person name="Steele J."/>
            <person name="Unlu G."/>
            <person name="Saier M.H. Jr."/>
            <person name="Klaenhammer T."/>
            <person name="Richardson P."/>
            <person name="Kozyavkin S."/>
            <person name="Weimer B.C."/>
            <person name="Mills D.A."/>
        </authorList>
    </citation>
    <scope>NUCLEOTIDE SEQUENCE [LARGE SCALE GENOMIC DNA]</scope>
    <source>
        <strain>ATCC 334 / BCRC 17002 / CCUG 31169 / CIP 107868 / KCTC 3260 / NRRL B-441</strain>
    </source>
</reference>
<evidence type="ECO:0000255" key="1">
    <source>
        <dbReference type="HAMAP-Rule" id="MF_00031"/>
    </source>
</evidence>
<comment type="function">
    <text evidence="1">The RuvA-RuvB-RuvC complex processes Holliday junction (HJ) DNA during genetic recombination and DNA repair, while the RuvA-RuvB complex plays an important role in the rescue of blocked DNA replication forks via replication fork reversal (RFR). RuvA specifically binds to HJ cruciform DNA, conferring on it an open structure. The RuvB hexamer acts as an ATP-dependent pump, pulling dsDNA into and through the RuvAB complex. HJ branch migration allows RuvC to scan DNA until it finds its consensus sequence, where it cleaves and resolves the cruciform DNA.</text>
</comment>
<comment type="subunit">
    <text evidence="1">Homotetramer. Forms an RuvA(8)-RuvB(12)-Holliday junction (HJ) complex. HJ DNA is sandwiched between 2 RuvA tetramers; dsDNA enters through RuvA and exits via RuvB. An RuvB hexamer assembles on each DNA strand where it exits the tetramer. Each RuvB hexamer is contacted by two RuvA subunits (via domain III) on 2 adjacent RuvB subunits; this complex drives branch migration. In the full resolvosome a probable DNA-RuvA(4)-RuvB(12)-RuvC(2) complex forms which resolves the HJ.</text>
</comment>
<comment type="subcellular location">
    <subcellularLocation>
        <location evidence="1">Cytoplasm</location>
    </subcellularLocation>
</comment>
<comment type="domain">
    <text evidence="1">Has three domains with a flexible linker between the domains II and III and assumes an 'L' shape. Domain III is highly mobile and contacts RuvB.</text>
</comment>
<comment type="similarity">
    <text evidence="1">Belongs to the RuvA family.</text>
</comment>
<sequence length="198" mass="21032">MYEYFEGIIQAVTPAYIVIDVHGIGFRLLVANPYHFEAGEQKRVYVQLIIRDNDQTLYGFEGAADKRTFNQLLTVTGIGPKSALAILANVSSGGLATAIAQDDVKFLTKFPGIGKKTAAQIILDLKGKITTDGQPAAAAIAPVASDVDSELADALAALVALGYPQRTVDGLTDTLKAFSAKTTDAYLREGLRLLSGKA</sequence>
<name>RUVA_LACP3</name>
<proteinExistence type="inferred from homology"/>
<feature type="chain" id="PRO_1000002468" description="Holliday junction branch migration complex subunit RuvA">
    <location>
        <begin position="1"/>
        <end position="198"/>
    </location>
</feature>
<feature type="region of interest" description="Domain I" evidence="1">
    <location>
        <begin position="1"/>
        <end position="61"/>
    </location>
</feature>
<feature type="region of interest" description="Domain II" evidence="1">
    <location>
        <begin position="62"/>
        <end position="140"/>
    </location>
</feature>
<feature type="region of interest" description="Flexible linker" evidence="1">
    <location>
        <begin position="141"/>
        <end position="145"/>
    </location>
</feature>
<feature type="region of interest" description="Domain III" evidence="1">
    <location>
        <begin position="146"/>
        <end position="198"/>
    </location>
</feature>
<accession>Q03B18</accession>
<organism>
    <name type="scientific">Lacticaseibacillus paracasei (strain ATCC 334 / BCRC 17002 / CCUG 31169 / CIP 107868 / KCTC 3260 / NRRL B-441)</name>
    <name type="common">Lactobacillus paracasei</name>
    <dbReference type="NCBI Taxonomy" id="321967"/>
    <lineage>
        <taxon>Bacteria</taxon>
        <taxon>Bacillati</taxon>
        <taxon>Bacillota</taxon>
        <taxon>Bacilli</taxon>
        <taxon>Lactobacillales</taxon>
        <taxon>Lactobacillaceae</taxon>
        <taxon>Lacticaseibacillus</taxon>
    </lineage>
</organism>
<gene>
    <name evidence="1" type="primary">ruvA</name>
    <name type="ordered locus">LSEI_0768</name>
</gene>
<keyword id="KW-0963">Cytoplasm</keyword>
<keyword id="KW-0227">DNA damage</keyword>
<keyword id="KW-0233">DNA recombination</keyword>
<keyword id="KW-0234">DNA repair</keyword>
<keyword id="KW-0238">DNA-binding</keyword>
<keyword id="KW-1185">Reference proteome</keyword>
<dbReference type="EMBL" id="CP000423">
    <property type="protein sequence ID" value="ABJ69604.1"/>
    <property type="molecule type" value="Genomic_DNA"/>
</dbReference>
<dbReference type="RefSeq" id="WP_003563967.1">
    <property type="nucleotide sequence ID" value="NC_008526.1"/>
</dbReference>
<dbReference type="RefSeq" id="YP_806046.1">
    <property type="nucleotide sequence ID" value="NC_008526.1"/>
</dbReference>
<dbReference type="SMR" id="Q03B18"/>
<dbReference type="STRING" id="321967.LSEI_0768"/>
<dbReference type="PaxDb" id="321967-LSEI_0768"/>
<dbReference type="GeneID" id="57089384"/>
<dbReference type="KEGG" id="lca:LSEI_0768"/>
<dbReference type="PATRIC" id="fig|321967.11.peg.770"/>
<dbReference type="HOGENOM" id="CLU_087936_1_0_9"/>
<dbReference type="Proteomes" id="UP000001651">
    <property type="component" value="Chromosome"/>
</dbReference>
<dbReference type="GO" id="GO:0005737">
    <property type="term" value="C:cytoplasm"/>
    <property type="evidence" value="ECO:0007669"/>
    <property type="project" value="UniProtKB-SubCell"/>
</dbReference>
<dbReference type="GO" id="GO:0009379">
    <property type="term" value="C:Holliday junction helicase complex"/>
    <property type="evidence" value="ECO:0007669"/>
    <property type="project" value="InterPro"/>
</dbReference>
<dbReference type="GO" id="GO:0048476">
    <property type="term" value="C:Holliday junction resolvase complex"/>
    <property type="evidence" value="ECO:0007669"/>
    <property type="project" value="UniProtKB-UniRule"/>
</dbReference>
<dbReference type="GO" id="GO:0005524">
    <property type="term" value="F:ATP binding"/>
    <property type="evidence" value="ECO:0007669"/>
    <property type="project" value="InterPro"/>
</dbReference>
<dbReference type="GO" id="GO:0000400">
    <property type="term" value="F:four-way junction DNA binding"/>
    <property type="evidence" value="ECO:0007669"/>
    <property type="project" value="UniProtKB-UniRule"/>
</dbReference>
<dbReference type="GO" id="GO:0009378">
    <property type="term" value="F:four-way junction helicase activity"/>
    <property type="evidence" value="ECO:0007669"/>
    <property type="project" value="InterPro"/>
</dbReference>
<dbReference type="GO" id="GO:0006310">
    <property type="term" value="P:DNA recombination"/>
    <property type="evidence" value="ECO:0007669"/>
    <property type="project" value="UniProtKB-UniRule"/>
</dbReference>
<dbReference type="GO" id="GO:0006281">
    <property type="term" value="P:DNA repair"/>
    <property type="evidence" value="ECO:0007669"/>
    <property type="project" value="UniProtKB-UniRule"/>
</dbReference>
<dbReference type="Gene3D" id="1.10.150.20">
    <property type="entry name" value="5' to 3' exonuclease, C-terminal subdomain"/>
    <property type="match status" value="1"/>
</dbReference>
<dbReference type="Gene3D" id="2.40.50.140">
    <property type="entry name" value="Nucleic acid-binding proteins"/>
    <property type="match status" value="1"/>
</dbReference>
<dbReference type="HAMAP" id="MF_00031">
    <property type="entry name" value="DNA_HJ_migration_RuvA"/>
    <property type="match status" value="1"/>
</dbReference>
<dbReference type="InterPro" id="IPR013849">
    <property type="entry name" value="DNA_helicase_Holl-junc_RuvA_I"/>
</dbReference>
<dbReference type="InterPro" id="IPR003583">
    <property type="entry name" value="Hlx-hairpin-Hlx_DNA-bd_motif"/>
</dbReference>
<dbReference type="InterPro" id="IPR012340">
    <property type="entry name" value="NA-bd_OB-fold"/>
</dbReference>
<dbReference type="InterPro" id="IPR000085">
    <property type="entry name" value="RuvA"/>
</dbReference>
<dbReference type="InterPro" id="IPR010994">
    <property type="entry name" value="RuvA_2-like"/>
</dbReference>
<dbReference type="InterPro" id="IPR011114">
    <property type="entry name" value="RuvA_C"/>
</dbReference>
<dbReference type="InterPro" id="IPR036267">
    <property type="entry name" value="RuvA_C_sf"/>
</dbReference>
<dbReference type="NCBIfam" id="TIGR00084">
    <property type="entry name" value="ruvA"/>
    <property type="match status" value="1"/>
</dbReference>
<dbReference type="Pfam" id="PF14520">
    <property type="entry name" value="HHH_5"/>
    <property type="match status" value="1"/>
</dbReference>
<dbReference type="Pfam" id="PF07499">
    <property type="entry name" value="RuvA_C"/>
    <property type="match status" value="1"/>
</dbReference>
<dbReference type="Pfam" id="PF01330">
    <property type="entry name" value="RuvA_N"/>
    <property type="match status" value="1"/>
</dbReference>
<dbReference type="SMART" id="SM00278">
    <property type="entry name" value="HhH1"/>
    <property type="match status" value="2"/>
</dbReference>
<dbReference type="SUPFAM" id="SSF46929">
    <property type="entry name" value="DNA helicase RuvA subunit, C-terminal domain"/>
    <property type="match status" value="1"/>
</dbReference>
<dbReference type="SUPFAM" id="SSF50249">
    <property type="entry name" value="Nucleic acid-binding proteins"/>
    <property type="match status" value="1"/>
</dbReference>
<dbReference type="SUPFAM" id="SSF47781">
    <property type="entry name" value="RuvA domain 2-like"/>
    <property type="match status" value="1"/>
</dbReference>